<sequence length="358" mass="41710">MLFKEAQAFIENMYKECHYETQIINKRLHDIELEIKETGTYTHTEEELIYGAKMAWRNSNRCIGRLFWDSLNVIDARDVTDEASFLSSITYHITQATNEGKLKPYITIYAPKDGPKIFNNQLIRYAGYDNCGDPAEKEVTRLANHLGWKGKGTNFDVLPLIYQLPNESVKFYEYPTSLIKEVPIEHNHYPKLRKLNLKWYAVPIISNMDLKIGGIVYPTAPFNGWYMVTEIGVRNFIDDYRYNLLEKVADAFEFDTLKNNSFNKDRALVELNYAVYHSFKKEGVSIVDHLTAAKQFELFERNEAQQGRQVTGKWSWLAPPLSPTLTSNYHHGYDNTVKDPNFFYKKKESNANQCPFHH</sequence>
<comment type="function">
    <text evidence="1">Catalyzes the production of nitric oxide.</text>
</comment>
<comment type="catalytic activity">
    <reaction evidence="1">
        <text>3 reduced [flavodoxin] + 2 L-arginine + 4 O2 = 3 oxidized [flavodoxin] + 2 L-citrulline + 2 nitric oxide + 4 H2O + 5 H(+)</text>
        <dbReference type="Rhea" id="RHEA:52324"/>
        <dbReference type="Rhea" id="RHEA-COMP:10622"/>
        <dbReference type="Rhea" id="RHEA-COMP:10623"/>
        <dbReference type="ChEBI" id="CHEBI:15377"/>
        <dbReference type="ChEBI" id="CHEBI:15378"/>
        <dbReference type="ChEBI" id="CHEBI:15379"/>
        <dbReference type="ChEBI" id="CHEBI:16480"/>
        <dbReference type="ChEBI" id="CHEBI:32682"/>
        <dbReference type="ChEBI" id="CHEBI:57618"/>
        <dbReference type="ChEBI" id="CHEBI:57743"/>
        <dbReference type="ChEBI" id="CHEBI:58210"/>
        <dbReference type="EC" id="1.14.14.47"/>
    </reaction>
</comment>
<comment type="cofactor">
    <cofactor>
        <name>heme</name>
        <dbReference type="ChEBI" id="CHEBI:30413"/>
    </cofactor>
</comment>
<comment type="cofactor">
    <cofactor evidence="1">
        <name>(6S)-5,6,7,8-tetrahydrofolate</name>
        <dbReference type="ChEBI" id="CHEBI:57453"/>
    </cofactor>
</comment>
<comment type="subunit">
    <text>Homodimer.</text>
</comment>
<comment type="miscellaneous">
    <text>This protein is similar to the oxygenase domain of eukaryotic nitric oxide synthases but lacks the reductase domain which, in eukaryotes, is responsible for transfer of electrons to the ferric heme during nitric oxide synthesis.</text>
</comment>
<comment type="similarity">
    <text evidence="2">Belongs to the NOS family. Bacterial NOS oxygenase subfamily.</text>
</comment>
<evidence type="ECO:0000250" key="1">
    <source>
        <dbReference type="UniProtKB" id="O34453"/>
    </source>
</evidence>
<evidence type="ECO:0000305" key="2"/>
<evidence type="ECO:0007829" key="3">
    <source>
        <dbReference type="PDB" id="1MJT"/>
    </source>
</evidence>
<reference key="1">
    <citation type="journal article" date="2002" name="Structure">
        <title>Crystal structure of SANOS, a bacterial nitric oxide synthase oxygenase protein from Staphylococcus aureus.</title>
        <authorList>
            <person name="Bird L.E."/>
            <person name="Ren J."/>
            <person name="Zhang J."/>
            <person name="Foxwell N."/>
            <person name="Hawkins A.R."/>
            <person name="Charles I.G."/>
            <person name="Stammers D.K."/>
        </authorList>
    </citation>
    <scope>X-RAY CRYSTALLOGRAPHY (2.4 ANGSTROMS) OF 2-346</scope>
</reference>
<name>NOSO_STAAU</name>
<feature type="chain" id="PRO_0000170960" description="Nitric oxide synthase oxygenase">
    <location>
        <begin position="1"/>
        <end position="358"/>
    </location>
</feature>
<feature type="binding site" description="axial binding residue">
    <location>
        <position position="62"/>
    </location>
    <ligand>
        <name>heme</name>
        <dbReference type="ChEBI" id="CHEBI:30413"/>
    </ligand>
    <ligandPart>
        <name>Fe</name>
        <dbReference type="ChEBI" id="CHEBI:18248"/>
    </ligandPart>
</feature>
<feature type="helix" evidence="3">
    <location>
        <begin position="2"/>
        <end position="16"/>
    </location>
</feature>
<feature type="helix" evidence="3">
    <location>
        <begin position="21"/>
        <end position="37"/>
    </location>
</feature>
<feature type="helix" evidence="3">
    <location>
        <begin position="45"/>
        <end position="57"/>
    </location>
</feature>
<feature type="helix" evidence="3">
    <location>
        <begin position="65"/>
        <end position="70"/>
    </location>
</feature>
<feature type="strand" evidence="3">
    <location>
        <begin position="72"/>
        <end position="76"/>
    </location>
</feature>
<feature type="helix" evidence="3">
    <location>
        <begin position="82"/>
        <end position="97"/>
    </location>
</feature>
<feature type="helix" evidence="3">
    <location>
        <begin position="98"/>
        <end position="100"/>
    </location>
</feature>
<feature type="strand" evidence="3">
    <location>
        <begin position="105"/>
        <end position="109"/>
    </location>
</feature>
<feature type="strand" evidence="3">
    <location>
        <begin position="111"/>
        <end position="113"/>
    </location>
</feature>
<feature type="strand" evidence="3">
    <location>
        <begin position="120"/>
        <end position="123"/>
    </location>
</feature>
<feature type="strand" evidence="3">
    <location>
        <begin position="129"/>
        <end position="132"/>
    </location>
</feature>
<feature type="helix" evidence="3">
    <location>
        <begin position="134"/>
        <end position="136"/>
    </location>
</feature>
<feature type="helix" evidence="3">
    <location>
        <begin position="137"/>
        <end position="146"/>
    </location>
</feature>
<feature type="strand" evidence="3">
    <location>
        <begin position="160"/>
        <end position="163"/>
    </location>
</feature>
<feature type="strand" evidence="3">
    <location>
        <begin position="170"/>
        <end position="172"/>
    </location>
</feature>
<feature type="helix" evidence="3">
    <location>
        <begin position="176"/>
        <end position="178"/>
    </location>
</feature>
<feature type="strand" evidence="3">
    <location>
        <begin position="181"/>
        <end position="183"/>
    </location>
</feature>
<feature type="helix" evidence="3">
    <location>
        <begin position="190"/>
        <end position="195"/>
    </location>
</feature>
<feature type="strand" evidence="3">
    <location>
        <begin position="198"/>
        <end position="201"/>
    </location>
</feature>
<feature type="strand" evidence="3">
    <location>
        <begin position="207"/>
        <end position="212"/>
    </location>
</feature>
<feature type="strand" evidence="3">
    <location>
        <begin position="215"/>
        <end position="218"/>
    </location>
</feature>
<feature type="helix" evidence="3">
    <location>
        <begin position="228"/>
        <end position="232"/>
    </location>
</feature>
<feature type="helix" evidence="3">
    <location>
        <begin position="234"/>
        <end position="237"/>
    </location>
</feature>
<feature type="turn" evidence="3">
    <location>
        <begin position="239"/>
        <end position="242"/>
    </location>
</feature>
<feature type="helix" evidence="3">
    <location>
        <begin position="245"/>
        <end position="251"/>
    </location>
</feature>
<feature type="helix" evidence="3">
    <location>
        <begin position="259"/>
        <end position="261"/>
    </location>
</feature>
<feature type="helix" evidence="3">
    <location>
        <begin position="263"/>
        <end position="281"/>
    </location>
</feature>
<feature type="helix" evidence="3">
    <location>
        <begin position="289"/>
        <end position="304"/>
    </location>
</feature>
<feature type="turn" evidence="3">
    <location>
        <begin position="305"/>
        <end position="307"/>
    </location>
</feature>
<feature type="helix" evidence="3">
    <location>
        <begin position="314"/>
        <end position="317"/>
    </location>
</feature>
<feature type="strand" evidence="3">
    <location>
        <begin position="320"/>
        <end position="322"/>
    </location>
</feature>
<feature type="helix" evidence="3">
    <location>
        <begin position="323"/>
        <end position="325"/>
    </location>
</feature>
<feature type="helix" evidence="3">
    <location>
        <begin position="327"/>
        <end position="330"/>
    </location>
</feature>
<feature type="strand" evidence="3">
    <location>
        <begin position="339"/>
        <end position="344"/>
    </location>
</feature>
<organism>
    <name type="scientific">Staphylococcus aureus</name>
    <dbReference type="NCBI Taxonomy" id="1280"/>
    <lineage>
        <taxon>Bacteria</taxon>
        <taxon>Bacillati</taxon>
        <taxon>Bacillota</taxon>
        <taxon>Bacilli</taxon>
        <taxon>Bacillales</taxon>
        <taxon>Staphylococcaceae</taxon>
        <taxon>Staphylococcus</taxon>
    </lineage>
</organism>
<keyword id="KW-0002">3D-structure</keyword>
<keyword id="KW-0349">Heme</keyword>
<keyword id="KW-0408">Iron</keyword>
<keyword id="KW-0479">Metal-binding</keyword>
<keyword id="KW-0560">Oxidoreductase</keyword>
<gene>
    <name type="primary">nos</name>
</gene>
<proteinExistence type="evidence at protein level"/>
<dbReference type="EC" id="1.14.14.47" evidence="1"/>
<dbReference type="RefSeq" id="WP_000897635.1">
    <property type="nucleotide sequence ID" value="NZ_WWFR01000006.1"/>
</dbReference>
<dbReference type="PDB" id="1MJT">
    <property type="method" value="X-ray"/>
    <property type="resolution" value="2.40 A"/>
    <property type="chains" value="A/B=2-346"/>
</dbReference>
<dbReference type="PDBsum" id="1MJT"/>
<dbReference type="SMR" id="P0A004"/>
<dbReference type="OMA" id="IWNHQLI"/>
<dbReference type="BRENDA" id="1.14.14.47">
    <property type="organism ID" value="3352"/>
</dbReference>
<dbReference type="EvolutionaryTrace" id="P0A004"/>
<dbReference type="GO" id="GO:0020037">
    <property type="term" value="F:heme binding"/>
    <property type="evidence" value="ECO:0007669"/>
    <property type="project" value="InterPro"/>
</dbReference>
<dbReference type="GO" id="GO:0046872">
    <property type="term" value="F:metal ion binding"/>
    <property type="evidence" value="ECO:0007669"/>
    <property type="project" value="UniProtKB-KW"/>
</dbReference>
<dbReference type="GO" id="GO:0004517">
    <property type="term" value="F:nitric-oxide synthase activity"/>
    <property type="evidence" value="ECO:0007669"/>
    <property type="project" value="InterPro"/>
</dbReference>
<dbReference type="GO" id="GO:0006809">
    <property type="term" value="P:nitric oxide biosynthetic process"/>
    <property type="evidence" value="ECO:0007669"/>
    <property type="project" value="InterPro"/>
</dbReference>
<dbReference type="CDD" id="cd00794">
    <property type="entry name" value="NOS_oxygenase_prok"/>
    <property type="match status" value="1"/>
</dbReference>
<dbReference type="Gene3D" id="3.90.340.10">
    <property type="entry name" value="Nitric Oxide Synthase, Chain A, domain 1"/>
    <property type="match status" value="1"/>
</dbReference>
<dbReference type="Gene3D" id="3.90.1230.10">
    <property type="entry name" value="Nitric Oxide Synthase, Chain A, domain 3"/>
    <property type="match status" value="1"/>
</dbReference>
<dbReference type="Gene3D" id="3.90.440.10">
    <property type="entry name" value="Nitric Oxide Synthase,Heme Domain,Chain A domain 2"/>
    <property type="match status" value="1"/>
</dbReference>
<dbReference type="InterPro" id="IPR017142">
    <property type="entry name" value="Nitric_oxide_synthase_Oase-su"/>
</dbReference>
<dbReference type="InterPro" id="IPR050607">
    <property type="entry name" value="NOS"/>
</dbReference>
<dbReference type="InterPro" id="IPR044943">
    <property type="entry name" value="NOS_dom_1"/>
</dbReference>
<dbReference type="InterPro" id="IPR044940">
    <property type="entry name" value="NOS_dom_2"/>
</dbReference>
<dbReference type="InterPro" id="IPR044944">
    <property type="entry name" value="NOS_dom_3"/>
</dbReference>
<dbReference type="InterPro" id="IPR004030">
    <property type="entry name" value="NOS_N"/>
</dbReference>
<dbReference type="InterPro" id="IPR036119">
    <property type="entry name" value="NOS_N_sf"/>
</dbReference>
<dbReference type="PANTHER" id="PTHR43410:SF1">
    <property type="entry name" value="NITRIC OXIDE SYNTHASE"/>
    <property type="match status" value="1"/>
</dbReference>
<dbReference type="PANTHER" id="PTHR43410">
    <property type="entry name" value="NITRIC OXIDE SYNTHASE OXYGENASE"/>
    <property type="match status" value="1"/>
</dbReference>
<dbReference type="Pfam" id="PF02898">
    <property type="entry name" value="NO_synthase"/>
    <property type="match status" value="1"/>
</dbReference>
<dbReference type="PIRSF" id="PIRSF037219">
    <property type="entry name" value="NOS_oxygenase"/>
    <property type="match status" value="1"/>
</dbReference>
<dbReference type="SUPFAM" id="SSF56512">
    <property type="entry name" value="Nitric oxide (NO) synthase oxygenase domain"/>
    <property type="match status" value="1"/>
</dbReference>
<dbReference type="PROSITE" id="PS60001">
    <property type="entry name" value="NOS"/>
    <property type="match status" value="1"/>
</dbReference>
<accession>P0A004</accession>
<accession>Q99SX3</accession>
<protein>
    <recommendedName>
        <fullName>Nitric oxide synthase oxygenase</fullName>
        <ecNumber evidence="1">1.14.14.47</ecNumber>
    </recommendedName>
    <alternativeName>
        <fullName>NOSoxy-like protein</fullName>
    </alternativeName>
    <alternativeName>
        <fullName>SANOS</fullName>
    </alternativeName>
</protein>